<protein>
    <recommendedName>
        <fullName evidence="1">UPF0398 protein SP70585_0442</fullName>
    </recommendedName>
</protein>
<organism>
    <name type="scientific">Streptococcus pneumoniae (strain 70585)</name>
    <dbReference type="NCBI Taxonomy" id="488221"/>
    <lineage>
        <taxon>Bacteria</taxon>
        <taxon>Bacillati</taxon>
        <taxon>Bacillota</taxon>
        <taxon>Bacilli</taxon>
        <taxon>Lactobacillales</taxon>
        <taxon>Streptococcaceae</taxon>
        <taxon>Streptococcus</taxon>
    </lineage>
</organism>
<name>Y442_STRP7</name>
<proteinExistence type="inferred from homology"/>
<accession>C1CBF1</accession>
<gene>
    <name type="ordered locus">SP70585_0442</name>
</gene>
<reference key="1">
    <citation type="journal article" date="2010" name="Genome Biol.">
        <title>Structure and dynamics of the pan-genome of Streptococcus pneumoniae and closely related species.</title>
        <authorList>
            <person name="Donati C."/>
            <person name="Hiller N.L."/>
            <person name="Tettelin H."/>
            <person name="Muzzi A."/>
            <person name="Croucher N.J."/>
            <person name="Angiuoli S.V."/>
            <person name="Oggioni M."/>
            <person name="Dunning Hotopp J.C."/>
            <person name="Hu F.Z."/>
            <person name="Riley D.R."/>
            <person name="Covacci A."/>
            <person name="Mitchell T.J."/>
            <person name="Bentley S.D."/>
            <person name="Kilian M."/>
            <person name="Ehrlich G.D."/>
            <person name="Rappuoli R."/>
            <person name="Moxon E.R."/>
            <person name="Masignani V."/>
        </authorList>
    </citation>
    <scope>NUCLEOTIDE SEQUENCE [LARGE SCALE GENOMIC DNA]</scope>
    <source>
        <strain>70585</strain>
    </source>
</reference>
<dbReference type="EMBL" id="CP000918">
    <property type="protein sequence ID" value="ACO17121.1"/>
    <property type="molecule type" value="Genomic_DNA"/>
</dbReference>
<dbReference type="RefSeq" id="WP_000179549.1">
    <property type="nucleotide sequence ID" value="NC_012468.1"/>
</dbReference>
<dbReference type="SMR" id="C1CBF1"/>
<dbReference type="KEGG" id="snm:SP70585_0442"/>
<dbReference type="HOGENOM" id="CLU_105319_0_0_9"/>
<dbReference type="Proteomes" id="UP000002211">
    <property type="component" value="Chromosome"/>
</dbReference>
<dbReference type="Gene3D" id="3.40.50.450">
    <property type="match status" value="1"/>
</dbReference>
<dbReference type="HAMAP" id="MF_01575">
    <property type="entry name" value="UPF0398"/>
    <property type="match status" value="1"/>
</dbReference>
<dbReference type="InterPro" id="IPR010697">
    <property type="entry name" value="YspA"/>
</dbReference>
<dbReference type="NCBIfam" id="NF010181">
    <property type="entry name" value="PRK13660.1"/>
    <property type="match status" value="1"/>
</dbReference>
<dbReference type="PANTHER" id="PTHR38440:SF1">
    <property type="entry name" value="UPF0398 PROTEIN SPR0331"/>
    <property type="match status" value="1"/>
</dbReference>
<dbReference type="PANTHER" id="PTHR38440">
    <property type="entry name" value="UPF0398 PROTEIN YPSA"/>
    <property type="match status" value="1"/>
</dbReference>
<dbReference type="Pfam" id="PF06908">
    <property type="entry name" value="YpsA"/>
    <property type="match status" value="1"/>
</dbReference>
<dbReference type="PIRSF" id="PIRSF021290">
    <property type="entry name" value="DUF1273"/>
    <property type="match status" value="1"/>
</dbReference>
<dbReference type="SUPFAM" id="SSF102405">
    <property type="entry name" value="MCP/YpsA-like"/>
    <property type="match status" value="1"/>
</dbReference>
<comment type="similarity">
    <text evidence="1">Belongs to the UPF0398 family.</text>
</comment>
<evidence type="ECO:0000255" key="1">
    <source>
        <dbReference type="HAMAP-Rule" id="MF_01575"/>
    </source>
</evidence>
<feature type="chain" id="PRO_1000185586" description="UPF0398 protein SP70585_0442">
    <location>
        <begin position="1"/>
        <end position="175"/>
    </location>
</feature>
<sequence length="175" mass="20706">MATALVLGYSAFDLGLFSDKDPRLKLIKKAIRKDLEAMAADGVSWLVFTGSLGFEYWVLEVAQEMKTEYGFQLATIFAFETHGENWNEGNQMKLSRFKQVDFVKYAYPRYEHKGQLRDYQQFLLENTTSSYLFYDEENETKLAYFYQKMKNQEDYFIKRLTFDQLNELAENFSEN</sequence>